<name>PYRG_PARDP</name>
<gene>
    <name evidence="1" type="primary">pyrG</name>
    <name type="ordered locus">Pden_3711</name>
</gene>
<protein>
    <recommendedName>
        <fullName evidence="1">CTP synthase</fullName>
        <ecNumber evidence="1">6.3.4.2</ecNumber>
    </recommendedName>
    <alternativeName>
        <fullName evidence="1">Cytidine 5'-triphosphate synthase</fullName>
    </alternativeName>
    <alternativeName>
        <fullName evidence="1">Cytidine triphosphate synthetase</fullName>
        <shortName evidence="1">CTP synthetase</shortName>
        <shortName evidence="1">CTPS</shortName>
    </alternativeName>
    <alternativeName>
        <fullName evidence="1">UTP--ammonia ligase</fullName>
    </alternativeName>
</protein>
<sequence>MARYIFITGGVVSSLGKGLASAALGALLQARGFTVRLRKLDPYLNVDPGTMSPFEHGEVFVTDDGAETDLDLGHYERFTGVSARKTDSVSSGRIYSNVLEKERRGAYLGKTIQVIPHVTNEIKDFLAVGEDEVDFMLCEIGGTVGDIEGLPFFEAIRQFAQERARSQCIFVHLTLLPWLAASGELKTKPTQHSVKELRSIGIAPDVLVCRSEHPIPEKERAKIALFCNVRPDAVIPAYDLKTIYEAPLAYHRAGLDQAVLDAFQISPAPRPDLTRWEDVMDRLENAEGQVRIAVVGKYTQLEDAYKSIAEALTHGGMANRVRVRADWVDSEKLEGEGAHLLDGYNGIIVPGGFGERGTEGMIAAAKYAREKKVPYLGICLGMQMAVIEGARNLAGMPDAGSEEFDHEAGKTRFTPVVYHLKEWVQGNYTVQRKLTDDKGGTMRLGAYTAVLVPGSKISEIYDGALEIEDRHRHRYEVDAKYRDQLEAAGLSFSGMSPDGRLPEVVEYRDHPWFIGVQSHPELKSKPFQPAPLFAGFIRAAMDNERLV</sequence>
<dbReference type="EC" id="6.3.4.2" evidence="1"/>
<dbReference type="EMBL" id="CP000490">
    <property type="protein sequence ID" value="ABL71778.1"/>
    <property type="molecule type" value="Genomic_DNA"/>
</dbReference>
<dbReference type="RefSeq" id="WP_011749947.1">
    <property type="nucleotide sequence ID" value="NC_008687.1"/>
</dbReference>
<dbReference type="SMR" id="A1B8D4"/>
<dbReference type="STRING" id="318586.Pden_3711"/>
<dbReference type="EnsemblBacteria" id="ABL71778">
    <property type="protein sequence ID" value="ABL71778"/>
    <property type="gene ID" value="Pden_3711"/>
</dbReference>
<dbReference type="GeneID" id="93453369"/>
<dbReference type="KEGG" id="pde:Pden_3711"/>
<dbReference type="eggNOG" id="COG0504">
    <property type="taxonomic scope" value="Bacteria"/>
</dbReference>
<dbReference type="HOGENOM" id="CLU_011675_5_0_5"/>
<dbReference type="OrthoDB" id="9801107at2"/>
<dbReference type="UniPathway" id="UPA00159">
    <property type="reaction ID" value="UER00277"/>
</dbReference>
<dbReference type="Proteomes" id="UP000000361">
    <property type="component" value="Chromosome 2"/>
</dbReference>
<dbReference type="GO" id="GO:0005829">
    <property type="term" value="C:cytosol"/>
    <property type="evidence" value="ECO:0007669"/>
    <property type="project" value="TreeGrafter"/>
</dbReference>
<dbReference type="GO" id="GO:0005524">
    <property type="term" value="F:ATP binding"/>
    <property type="evidence" value="ECO:0007669"/>
    <property type="project" value="UniProtKB-KW"/>
</dbReference>
<dbReference type="GO" id="GO:0003883">
    <property type="term" value="F:CTP synthase activity"/>
    <property type="evidence" value="ECO:0007669"/>
    <property type="project" value="UniProtKB-UniRule"/>
</dbReference>
<dbReference type="GO" id="GO:0004359">
    <property type="term" value="F:glutaminase activity"/>
    <property type="evidence" value="ECO:0007669"/>
    <property type="project" value="RHEA"/>
</dbReference>
<dbReference type="GO" id="GO:0042802">
    <property type="term" value="F:identical protein binding"/>
    <property type="evidence" value="ECO:0007669"/>
    <property type="project" value="TreeGrafter"/>
</dbReference>
<dbReference type="GO" id="GO:0046872">
    <property type="term" value="F:metal ion binding"/>
    <property type="evidence" value="ECO:0007669"/>
    <property type="project" value="UniProtKB-KW"/>
</dbReference>
<dbReference type="GO" id="GO:0044210">
    <property type="term" value="P:'de novo' CTP biosynthetic process"/>
    <property type="evidence" value="ECO:0007669"/>
    <property type="project" value="UniProtKB-UniRule"/>
</dbReference>
<dbReference type="GO" id="GO:0019856">
    <property type="term" value="P:pyrimidine nucleobase biosynthetic process"/>
    <property type="evidence" value="ECO:0007669"/>
    <property type="project" value="TreeGrafter"/>
</dbReference>
<dbReference type="CDD" id="cd03113">
    <property type="entry name" value="CTPS_N"/>
    <property type="match status" value="1"/>
</dbReference>
<dbReference type="CDD" id="cd01746">
    <property type="entry name" value="GATase1_CTP_Synthase"/>
    <property type="match status" value="1"/>
</dbReference>
<dbReference type="FunFam" id="3.40.50.300:FF:000009">
    <property type="entry name" value="CTP synthase"/>
    <property type="match status" value="1"/>
</dbReference>
<dbReference type="FunFam" id="3.40.50.880:FF:000002">
    <property type="entry name" value="CTP synthase"/>
    <property type="match status" value="1"/>
</dbReference>
<dbReference type="Gene3D" id="3.40.50.880">
    <property type="match status" value="1"/>
</dbReference>
<dbReference type="Gene3D" id="3.40.50.300">
    <property type="entry name" value="P-loop containing nucleotide triphosphate hydrolases"/>
    <property type="match status" value="1"/>
</dbReference>
<dbReference type="HAMAP" id="MF_01227">
    <property type="entry name" value="PyrG"/>
    <property type="match status" value="1"/>
</dbReference>
<dbReference type="InterPro" id="IPR029062">
    <property type="entry name" value="Class_I_gatase-like"/>
</dbReference>
<dbReference type="InterPro" id="IPR004468">
    <property type="entry name" value="CTP_synthase"/>
</dbReference>
<dbReference type="InterPro" id="IPR017456">
    <property type="entry name" value="CTP_synthase_N"/>
</dbReference>
<dbReference type="InterPro" id="IPR017926">
    <property type="entry name" value="GATASE"/>
</dbReference>
<dbReference type="InterPro" id="IPR033828">
    <property type="entry name" value="GATase1_CTP_Synthase"/>
</dbReference>
<dbReference type="InterPro" id="IPR027417">
    <property type="entry name" value="P-loop_NTPase"/>
</dbReference>
<dbReference type="NCBIfam" id="NF003792">
    <property type="entry name" value="PRK05380.1"/>
    <property type="match status" value="1"/>
</dbReference>
<dbReference type="NCBIfam" id="TIGR00337">
    <property type="entry name" value="PyrG"/>
    <property type="match status" value="1"/>
</dbReference>
<dbReference type="PANTHER" id="PTHR11550">
    <property type="entry name" value="CTP SYNTHASE"/>
    <property type="match status" value="1"/>
</dbReference>
<dbReference type="PANTHER" id="PTHR11550:SF0">
    <property type="entry name" value="CTP SYNTHASE-RELATED"/>
    <property type="match status" value="1"/>
</dbReference>
<dbReference type="Pfam" id="PF06418">
    <property type="entry name" value="CTP_synth_N"/>
    <property type="match status" value="1"/>
</dbReference>
<dbReference type="Pfam" id="PF00117">
    <property type="entry name" value="GATase"/>
    <property type="match status" value="1"/>
</dbReference>
<dbReference type="SUPFAM" id="SSF52317">
    <property type="entry name" value="Class I glutamine amidotransferase-like"/>
    <property type="match status" value="1"/>
</dbReference>
<dbReference type="SUPFAM" id="SSF52540">
    <property type="entry name" value="P-loop containing nucleoside triphosphate hydrolases"/>
    <property type="match status" value="1"/>
</dbReference>
<dbReference type="PROSITE" id="PS51273">
    <property type="entry name" value="GATASE_TYPE_1"/>
    <property type="match status" value="1"/>
</dbReference>
<feature type="chain" id="PRO_1000139510" description="CTP synthase">
    <location>
        <begin position="1"/>
        <end position="547"/>
    </location>
</feature>
<feature type="domain" description="Glutamine amidotransferase type-1" evidence="1">
    <location>
        <begin position="291"/>
        <end position="546"/>
    </location>
</feature>
<feature type="region of interest" description="Amidoligase domain" evidence="1">
    <location>
        <begin position="1"/>
        <end position="265"/>
    </location>
</feature>
<feature type="active site" description="Nucleophile; for glutamine hydrolysis" evidence="1">
    <location>
        <position position="379"/>
    </location>
</feature>
<feature type="active site" evidence="1">
    <location>
        <position position="519"/>
    </location>
</feature>
<feature type="active site" evidence="1">
    <location>
        <position position="521"/>
    </location>
</feature>
<feature type="binding site" evidence="1">
    <location>
        <position position="13"/>
    </location>
    <ligand>
        <name>CTP</name>
        <dbReference type="ChEBI" id="CHEBI:37563"/>
        <note>allosteric inhibitor</note>
    </ligand>
</feature>
<feature type="binding site" evidence="1">
    <location>
        <position position="13"/>
    </location>
    <ligand>
        <name>UTP</name>
        <dbReference type="ChEBI" id="CHEBI:46398"/>
    </ligand>
</feature>
<feature type="binding site" evidence="1">
    <location>
        <begin position="14"/>
        <end position="19"/>
    </location>
    <ligand>
        <name>ATP</name>
        <dbReference type="ChEBI" id="CHEBI:30616"/>
    </ligand>
</feature>
<feature type="binding site" evidence="1">
    <location>
        <position position="71"/>
    </location>
    <ligand>
        <name>ATP</name>
        <dbReference type="ChEBI" id="CHEBI:30616"/>
    </ligand>
</feature>
<feature type="binding site" evidence="1">
    <location>
        <position position="71"/>
    </location>
    <ligand>
        <name>Mg(2+)</name>
        <dbReference type="ChEBI" id="CHEBI:18420"/>
    </ligand>
</feature>
<feature type="binding site" evidence="1">
    <location>
        <position position="139"/>
    </location>
    <ligand>
        <name>Mg(2+)</name>
        <dbReference type="ChEBI" id="CHEBI:18420"/>
    </ligand>
</feature>
<feature type="binding site" evidence="1">
    <location>
        <begin position="146"/>
        <end position="148"/>
    </location>
    <ligand>
        <name>CTP</name>
        <dbReference type="ChEBI" id="CHEBI:37563"/>
        <note>allosteric inhibitor</note>
    </ligand>
</feature>
<feature type="binding site" evidence="1">
    <location>
        <begin position="186"/>
        <end position="191"/>
    </location>
    <ligand>
        <name>CTP</name>
        <dbReference type="ChEBI" id="CHEBI:37563"/>
        <note>allosteric inhibitor</note>
    </ligand>
</feature>
<feature type="binding site" evidence="1">
    <location>
        <begin position="186"/>
        <end position="191"/>
    </location>
    <ligand>
        <name>UTP</name>
        <dbReference type="ChEBI" id="CHEBI:46398"/>
    </ligand>
</feature>
<feature type="binding site" evidence="1">
    <location>
        <position position="222"/>
    </location>
    <ligand>
        <name>CTP</name>
        <dbReference type="ChEBI" id="CHEBI:37563"/>
        <note>allosteric inhibitor</note>
    </ligand>
</feature>
<feature type="binding site" evidence="1">
    <location>
        <position position="222"/>
    </location>
    <ligand>
        <name>UTP</name>
        <dbReference type="ChEBI" id="CHEBI:46398"/>
    </ligand>
</feature>
<feature type="binding site" evidence="1">
    <location>
        <position position="352"/>
    </location>
    <ligand>
        <name>L-glutamine</name>
        <dbReference type="ChEBI" id="CHEBI:58359"/>
    </ligand>
</feature>
<feature type="binding site" evidence="1">
    <location>
        <begin position="380"/>
        <end position="383"/>
    </location>
    <ligand>
        <name>L-glutamine</name>
        <dbReference type="ChEBI" id="CHEBI:58359"/>
    </ligand>
</feature>
<feature type="binding site" evidence="1">
    <location>
        <position position="403"/>
    </location>
    <ligand>
        <name>L-glutamine</name>
        <dbReference type="ChEBI" id="CHEBI:58359"/>
    </ligand>
</feature>
<feature type="binding site" evidence="1">
    <location>
        <position position="474"/>
    </location>
    <ligand>
        <name>L-glutamine</name>
        <dbReference type="ChEBI" id="CHEBI:58359"/>
    </ligand>
</feature>
<evidence type="ECO:0000255" key="1">
    <source>
        <dbReference type="HAMAP-Rule" id="MF_01227"/>
    </source>
</evidence>
<proteinExistence type="inferred from homology"/>
<keyword id="KW-0067">ATP-binding</keyword>
<keyword id="KW-0315">Glutamine amidotransferase</keyword>
<keyword id="KW-0436">Ligase</keyword>
<keyword id="KW-0460">Magnesium</keyword>
<keyword id="KW-0479">Metal-binding</keyword>
<keyword id="KW-0547">Nucleotide-binding</keyword>
<keyword id="KW-0665">Pyrimidine biosynthesis</keyword>
<keyword id="KW-1185">Reference proteome</keyword>
<comment type="function">
    <text evidence="1">Catalyzes the ATP-dependent amination of UTP to CTP with either L-glutamine or ammonia as the source of nitrogen. Regulates intracellular CTP levels through interactions with the four ribonucleotide triphosphates.</text>
</comment>
<comment type="catalytic activity">
    <reaction evidence="1">
        <text>UTP + L-glutamine + ATP + H2O = CTP + L-glutamate + ADP + phosphate + 2 H(+)</text>
        <dbReference type="Rhea" id="RHEA:26426"/>
        <dbReference type="ChEBI" id="CHEBI:15377"/>
        <dbReference type="ChEBI" id="CHEBI:15378"/>
        <dbReference type="ChEBI" id="CHEBI:29985"/>
        <dbReference type="ChEBI" id="CHEBI:30616"/>
        <dbReference type="ChEBI" id="CHEBI:37563"/>
        <dbReference type="ChEBI" id="CHEBI:43474"/>
        <dbReference type="ChEBI" id="CHEBI:46398"/>
        <dbReference type="ChEBI" id="CHEBI:58359"/>
        <dbReference type="ChEBI" id="CHEBI:456216"/>
        <dbReference type="EC" id="6.3.4.2"/>
    </reaction>
</comment>
<comment type="catalytic activity">
    <reaction evidence="1">
        <text>L-glutamine + H2O = L-glutamate + NH4(+)</text>
        <dbReference type="Rhea" id="RHEA:15889"/>
        <dbReference type="ChEBI" id="CHEBI:15377"/>
        <dbReference type="ChEBI" id="CHEBI:28938"/>
        <dbReference type="ChEBI" id="CHEBI:29985"/>
        <dbReference type="ChEBI" id="CHEBI:58359"/>
    </reaction>
</comment>
<comment type="catalytic activity">
    <reaction evidence="1">
        <text>UTP + NH4(+) + ATP = CTP + ADP + phosphate + 2 H(+)</text>
        <dbReference type="Rhea" id="RHEA:16597"/>
        <dbReference type="ChEBI" id="CHEBI:15378"/>
        <dbReference type="ChEBI" id="CHEBI:28938"/>
        <dbReference type="ChEBI" id="CHEBI:30616"/>
        <dbReference type="ChEBI" id="CHEBI:37563"/>
        <dbReference type="ChEBI" id="CHEBI:43474"/>
        <dbReference type="ChEBI" id="CHEBI:46398"/>
        <dbReference type="ChEBI" id="CHEBI:456216"/>
    </reaction>
</comment>
<comment type="activity regulation">
    <text evidence="1">Allosterically activated by GTP, when glutamine is the substrate; GTP has no effect on the reaction when ammonia is the substrate. The allosteric effector GTP functions by stabilizing the protein conformation that binds the tetrahedral intermediate(s) formed during glutamine hydrolysis. Inhibited by the product CTP, via allosteric rather than competitive inhibition.</text>
</comment>
<comment type="pathway">
    <text evidence="1">Pyrimidine metabolism; CTP biosynthesis via de novo pathway; CTP from UDP: step 2/2.</text>
</comment>
<comment type="subunit">
    <text evidence="1">Homotetramer.</text>
</comment>
<comment type="miscellaneous">
    <text evidence="1">CTPSs have evolved a hybrid strategy for distinguishing between UTP and CTP. The overlapping regions of the product feedback inhibitory and substrate sites recognize a common feature in both compounds, the triphosphate moiety. To differentiate isosteric substrate and product pyrimidine rings, an additional pocket far from the expected kinase/ligase catalytic site, specifically recognizes the cytosine and ribose portions of the product inhibitor.</text>
</comment>
<comment type="similarity">
    <text evidence="1">Belongs to the CTP synthase family.</text>
</comment>
<organism>
    <name type="scientific">Paracoccus denitrificans (strain Pd 1222)</name>
    <dbReference type="NCBI Taxonomy" id="318586"/>
    <lineage>
        <taxon>Bacteria</taxon>
        <taxon>Pseudomonadati</taxon>
        <taxon>Pseudomonadota</taxon>
        <taxon>Alphaproteobacteria</taxon>
        <taxon>Rhodobacterales</taxon>
        <taxon>Paracoccaceae</taxon>
        <taxon>Paracoccus</taxon>
    </lineage>
</organism>
<reference key="1">
    <citation type="submission" date="2006-12" db="EMBL/GenBank/DDBJ databases">
        <title>Complete sequence of chromosome 2 of Paracoccus denitrificans PD1222.</title>
        <authorList>
            <person name="Copeland A."/>
            <person name="Lucas S."/>
            <person name="Lapidus A."/>
            <person name="Barry K."/>
            <person name="Detter J.C."/>
            <person name="Glavina del Rio T."/>
            <person name="Hammon N."/>
            <person name="Israni S."/>
            <person name="Dalin E."/>
            <person name="Tice H."/>
            <person name="Pitluck S."/>
            <person name="Munk A.C."/>
            <person name="Brettin T."/>
            <person name="Bruce D."/>
            <person name="Han C."/>
            <person name="Tapia R."/>
            <person name="Gilna P."/>
            <person name="Schmutz J."/>
            <person name="Larimer F."/>
            <person name="Land M."/>
            <person name="Hauser L."/>
            <person name="Kyrpides N."/>
            <person name="Lykidis A."/>
            <person name="Spiro S."/>
            <person name="Richardson D.J."/>
            <person name="Moir J.W.B."/>
            <person name="Ferguson S.J."/>
            <person name="van Spanning R.J.M."/>
            <person name="Richardson P."/>
        </authorList>
    </citation>
    <scope>NUCLEOTIDE SEQUENCE [LARGE SCALE GENOMIC DNA]</scope>
    <source>
        <strain>Pd 1222</strain>
    </source>
</reference>
<accession>A1B8D4</accession>